<protein>
    <recommendedName>
        <fullName evidence="1">ATP synthase subunit beta</fullName>
        <ecNumber evidence="1">7.1.2.2</ecNumber>
    </recommendedName>
    <alternativeName>
        <fullName evidence="1">ATP synthase F1 sector subunit beta</fullName>
    </alternativeName>
    <alternativeName>
        <fullName evidence="1">F-ATPase subunit beta</fullName>
    </alternativeName>
</protein>
<feature type="chain" id="PRO_1000143491" description="ATP synthase subunit beta">
    <location>
        <begin position="1"/>
        <end position="467"/>
    </location>
</feature>
<feature type="binding site" evidence="1">
    <location>
        <begin position="156"/>
        <end position="163"/>
    </location>
    <ligand>
        <name>ATP</name>
        <dbReference type="ChEBI" id="CHEBI:30616"/>
    </ligand>
</feature>
<comment type="function">
    <text evidence="1">Produces ATP from ADP in the presence of a proton gradient across the membrane. The catalytic sites are hosted primarily by the beta subunits.</text>
</comment>
<comment type="catalytic activity">
    <reaction evidence="1">
        <text>ATP + H2O + 4 H(+)(in) = ADP + phosphate + 5 H(+)(out)</text>
        <dbReference type="Rhea" id="RHEA:57720"/>
        <dbReference type="ChEBI" id="CHEBI:15377"/>
        <dbReference type="ChEBI" id="CHEBI:15378"/>
        <dbReference type="ChEBI" id="CHEBI:30616"/>
        <dbReference type="ChEBI" id="CHEBI:43474"/>
        <dbReference type="ChEBI" id="CHEBI:456216"/>
        <dbReference type="EC" id="7.1.2.2"/>
    </reaction>
</comment>
<comment type="subunit">
    <text evidence="1">F-type ATPases have 2 components, CF(1) - the catalytic core - and CF(0) - the membrane proton channel. CF(1) has five subunits: alpha(3), beta(3), gamma(1), delta(1), epsilon(1). CF(0) has three main subunits: a(1), b(2) and c(9-12). The alpha and beta chains form an alternating ring which encloses part of the gamma chain. CF(1) is attached to CF(0) by a central stalk formed by the gamma and epsilon chains, while a peripheral stalk is formed by the delta and b chains.</text>
</comment>
<comment type="subcellular location">
    <subcellularLocation>
        <location evidence="1">Cell inner membrane</location>
        <topology evidence="1">Peripheral membrane protein</topology>
    </subcellularLocation>
</comment>
<comment type="similarity">
    <text evidence="1">Belongs to the ATPase alpha/beta chains family.</text>
</comment>
<organism>
    <name type="scientific">Cupriavidus taiwanensis (strain DSM 17343 / BCRC 17206 / CCUG 44338 / CIP 107171 / LMG 19424 / R1)</name>
    <name type="common">Ralstonia taiwanensis (strain LMG 19424)</name>
    <dbReference type="NCBI Taxonomy" id="977880"/>
    <lineage>
        <taxon>Bacteria</taxon>
        <taxon>Pseudomonadati</taxon>
        <taxon>Pseudomonadota</taxon>
        <taxon>Betaproteobacteria</taxon>
        <taxon>Burkholderiales</taxon>
        <taxon>Burkholderiaceae</taxon>
        <taxon>Cupriavidus</taxon>
    </lineage>
</organism>
<name>ATPB_CUPTR</name>
<evidence type="ECO:0000255" key="1">
    <source>
        <dbReference type="HAMAP-Rule" id="MF_01347"/>
    </source>
</evidence>
<keyword id="KW-0066">ATP synthesis</keyword>
<keyword id="KW-0067">ATP-binding</keyword>
<keyword id="KW-0997">Cell inner membrane</keyword>
<keyword id="KW-1003">Cell membrane</keyword>
<keyword id="KW-0139">CF(1)</keyword>
<keyword id="KW-0375">Hydrogen ion transport</keyword>
<keyword id="KW-0406">Ion transport</keyword>
<keyword id="KW-0472">Membrane</keyword>
<keyword id="KW-0547">Nucleotide-binding</keyword>
<keyword id="KW-1278">Translocase</keyword>
<keyword id="KW-0813">Transport</keyword>
<reference key="1">
    <citation type="journal article" date="2008" name="Genome Res.">
        <title>Genome sequence of the beta-rhizobium Cupriavidus taiwanensis and comparative genomics of rhizobia.</title>
        <authorList>
            <person name="Amadou C."/>
            <person name="Pascal G."/>
            <person name="Mangenot S."/>
            <person name="Glew M."/>
            <person name="Bontemps C."/>
            <person name="Capela D."/>
            <person name="Carrere S."/>
            <person name="Cruveiller S."/>
            <person name="Dossat C."/>
            <person name="Lajus A."/>
            <person name="Marchetti M."/>
            <person name="Poinsot V."/>
            <person name="Rouy Z."/>
            <person name="Servin B."/>
            <person name="Saad M."/>
            <person name="Schenowitz C."/>
            <person name="Barbe V."/>
            <person name="Batut J."/>
            <person name="Medigue C."/>
            <person name="Masson-Boivin C."/>
        </authorList>
    </citation>
    <scope>NUCLEOTIDE SEQUENCE [LARGE SCALE GENOMIC DNA]</scope>
    <source>
        <strain>DSM 17343 / BCRC 17206 / CCUG 44338 / CIP 107171 / LMG 19424 / R1</strain>
    </source>
</reference>
<dbReference type="EC" id="7.1.2.2" evidence="1"/>
<dbReference type="EMBL" id="CU633749">
    <property type="protein sequence ID" value="CAQ71012.1"/>
    <property type="molecule type" value="Genomic_DNA"/>
</dbReference>
<dbReference type="RefSeq" id="WP_012354278.1">
    <property type="nucleotide sequence ID" value="NC_010528.1"/>
</dbReference>
<dbReference type="SMR" id="B3R7L5"/>
<dbReference type="GeneID" id="29762725"/>
<dbReference type="KEGG" id="cti:RALTA_A3092"/>
<dbReference type="eggNOG" id="COG0055">
    <property type="taxonomic scope" value="Bacteria"/>
</dbReference>
<dbReference type="HOGENOM" id="CLU_022398_0_2_4"/>
<dbReference type="BioCyc" id="CTAI977880:RALTA_RS15120-MONOMER"/>
<dbReference type="Proteomes" id="UP000001692">
    <property type="component" value="Chromosome 1"/>
</dbReference>
<dbReference type="GO" id="GO:0005886">
    <property type="term" value="C:plasma membrane"/>
    <property type="evidence" value="ECO:0007669"/>
    <property type="project" value="UniProtKB-SubCell"/>
</dbReference>
<dbReference type="GO" id="GO:0045259">
    <property type="term" value="C:proton-transporting ATP synthase complex"/>
    <property type="evidence" value="ECO:0007669"/>
    <property type="project" value="UniProtKB-KW"/>
</dbReference>
<dbReference type="GO" id="GO:0005524">
    <property type="term" value="F:ATP binding"/>
    <property type="evidence" value="ECO:0007669"/>
    <property type="project" value="UniProtKB-UniRule"/>
</dbReference>
<dbReference type="GO" id="GO:0016887">
    <property type="term" value="F:ATP hydrolysis activity"/>
    <property type="evidence" value="ECO:0007669"/>
    <property type="project" value="InterPro"/>
</dbReference>
<dbReference type="GO" id="GO:0046933">
    <property type="term" value="F:proton-transporting ATP synthase activity, rotational mechanism"/>
    <property type="evidence" value="ECO:0007669"/>
    <property type="project" value="UniProtKB-UniRule"/>
</dbReference>
<dbReference type="CDD" id="cd18110">
    <property type="entry name" value="ATP-synt_F1_beta_C"/>
    <property type="match status" value="1"/>
</dbReference>
<dbReference type="CDD" id="cd18115">
    <property type="entry name" value="ATP-synt_F1_beta_N"/>
    <property type="match status" value="1"/>
</dbReference>
<dbReference type="CDD" id="cd01133">
    <property type="entry name" value="F1-ATPase_beta_CD"/>
    <property type="match status" value="1"/>
</dbReference>
<dbReference type="FunFam" id="1.10.1140.10:FF:000001">
    <property type="entry name" value="ATP synthase subunit beta"/>
    <property type="match status" value="1"/>
</dbReference>
<dbReference type="FunFam" id="3.40.50.300:FF:000004">
    <property type="entry name" value="ATP synthase subunit beta"/>
    <property type="match status" value="1"/>
</dbReference>
<dbReference type="Gene3D" id="2.40.10.170">
    <property type="match status" value="1"/>
</dbReference>
<dbReference type="Gene3D" id="1.10.1140.10">
    <property type="entry name" value="Bovine Mitochondrial F1-atpase, Atp Synthase Beta Chain, Chain D, domain 3"/>
    <property type="match status" value="1"/>
</dbReference>
<dbReference type="Gene3D" id="3.40.50.300">
    <property type="entry name" value="P-loop containing nucleotide triphosphate hydrolases"/>
    <property type="match status" value="1"/>
</dbReference>
<dbReference type="HAMAP" id="MF_01347">
    <property type="entry name" value="ATP_synth_beta_bact"/>
    <property type="match status" value="1"/>
</dbReference>
<dbReference type="InterPro" id="IPR003593">
    <property type="entry name" value="AAA+_ATPase"/>
</dbReference>
<dbReference type="InterPro" id="IPR055190">
    <property type="entry name" value="ATP-synt_VA_C"/>
</dbReference>
<dbReference type="InterPro" id="IPR005722">
    <property type="entry name" value="ATP_synth_F1_bsu"/>
</dbReference>
<dbReference type="InterPro" id="IPR020003">
    <property type="entry name" value="ATPase_a/bsu_AS"/>
</dbReference>
<dbReference type="InterPro" id="IPR050053">
    <property type="entry name" value="ATPase_alpha/beta_chains"/>
</dbReference>
<dbReference type="InterPro" id="IPR004100">
    <property type="entry name" value="ATPase_F1/V1/A1_a/bsu_N"/>
</dbReference>
<dbReference type="InterPro" id="IPR036121">
    <property type="entry name" value="ATPase_F1/V1/A1_a/bsu_N_sf"/>
</dbReference>
<dbReference type="InterPro" id="IPR000194">
    <property type="entry name" value="ATPase_F1/V1/A1_a/bsu_nucl-bd"/>
</dbReference>
<dbReference type="InterPro" id="IPR024034">
    <property type="entry name" value="ATPase_F1/V1_b/a_C"/>
</dbReference>
<dbReference type="InterPro" id="IPR027417">
    <property type="entry name" value="P-loop_NTPase"/>
</dbReference>
<dbReference type="NCBIfam" id="TIGR01039">
    <property type="entry name" value="atpD"/>
    <property type="match status" value="1"/>
</dbReference>
<dbReference type="PANTHER" id="PTHR15184">
    <property type="entry name" value="ATP SYNTHASE"/>
    <property type="match status" value="1"/>
</dbReference>
<dbReference type="PANTHER" id="PTHR15184:SF71">
    <property type="entry name" value="ATP SYNTHASE SUBUNIT BETA, MITOCHONDRIAL"/>
    <property type="match status" value="1"/>
</dbReference>
<dbReference type="Pfam" id="PF00006">
    <property type="entry name" value="ATP-synt_ab"/>
    <property type="match status" value="1"/>
</dbReference>
<dbReference type="Pfam" id="PF02874">
    <property type="entry name" value="ATP-synt_ab_N"/>
    <property type="match status" value="1"/>
</dbReference>
<dbReference type="Pfam" id="PF22919">
    <property type="entry name" value="ATP-synt_VA_C"/>
    <property type="match status" value="1"/>
</dbReference>
<dbReference type="SMART" id="SM00382">
    <property type="entry name" value="AAA"/>
    <property type="match status" value="1"/>
</dbReference>
<dbReference type="SUPFAM" id="SSF47917">
    <property type="entry name" value="C-terminal domain of alpha and beta subunits of F1 ATP synthase"/>
    <property type="match status" value="1"/>
</dbReference>
<dbReference type="SUPFAM" id="SSF50615">
    <property type="entry name" value="N-terminal domain of alpha and beta subunits of F1 ATP synthase"/>
    <property type="match status" value="1"/>
</dbReference>
<dbReference type="SUPFAM" id="SSF52540">
    <property type="entry name" value="P-loop containing nucleoside triphosphate hydrolases"/>
    <property type="match status" value="1"/>
</dbReference>
<dbReference type="PROSITE" id="PS00152">
    <property type="entry name" value="ATPASE_ALPHA_BETA"/>
    <property type="match status" value="1"/>
</dbReference>
<sequence length="467" mass="50833">MSIGNIVQCIGAVVDIEFPRDAMPKVYDALVLEDSSDASFAEKGLTFEVQQQLGDGVVRTIALGSSDGLRRGMAVKSTGAPISVPVGHGTLGRIMDVLGRPIDEAGPIASDELRAIHQKAPKFDELSPSVDLLETGIKVIDLVCPFAKGGKVGLFGGAGVGKTVNMMELINNIAKQHSGLSVFAGVGERTREGNDFYHEMKDSNVLDKVAMVFGQMNEPPGNRLRVALTGLTMAERFRDEGRDILFFVDNIYRYTLAGTEVSALLGRMPSAVGYQPTLAEEMGKLQERITSTKTGSITSIQAVYVPADDLTDPSPATTFLHLDSTVVLSRDIAALGIYPAVDPLDSTSRQLDPQVVGTEHYEVARRVQQTLQRYKELRDIIAILGMDELSPEDKLAVSRARKIQRFLSQPFHVAEVFTGSPGKYVPLKETIRGFKMLVDGECDHLPEQAFYMVGSIDEAFEKAKKLQ</sequence>
<gene>
    <name evidence="1" type="primary">atpD</name>
    <name type="ordered locus">RALTA_A3092</name>
</gene>
<accession>B3R7L5</accession>
<proteinExistence type="inferred from homology"/>